<sequence>MSITSDEVNFLVYRYLQESGFSHSAFTFGIESHISQSNINGTLVPPSALISILQKGLQYVEAEISINKDGTVFDSRPIESLSLIVAVIPDVVQMRQQAFGEKLTQQQASAAATEASAMAKAATMTPAAISQQNPPKNREATVNGEENGAHEINNHSKPMEIDGDVEIPPNKATVLRGHESEVFICAWNPVSDLLASGSGDSTARIWNLNENSNGGSTQLVLRHCIREGGHDVPSNKDVTSLDWNSDGTLLAMGSYDGFARIWTENGNLASTLGQHKGPIFALKWNKKGNYVLSAGVDKTTIIWDAHTGEAKQQFPFHSAPALDVDWQNNMTFASCSTDMCIHVCRLGCDHPVKTFQGHTNEVNAIKWDPSGMLLASCSDDMTLKIWSMKQDACVHDLQAHSKEIYTIKWSPTGPATSNPNSSIMLASASFDSTVRLWDVEQGVCTHTLMKHQEPVYSVAFSPDGKYLASGSFDKYVHIWNTQSGSLVHSYQGTGGIFEVCWNARGDKVGASASDGSVCVLDL</sequence>
<feature type="initiator methionine" description="Removed" evidence="3">
    <location>
        <position position="1"/>
    </location>
</feature>
<feature type="chain" id="PRO_0000051264" description="F-box-like/WD repeat-containing protein TBL1Y">
    <location>
        <begin position="2"/>
        <end position="522"/>
    </location>
</feature>
<feature type="domain" description="LisH" evidence="4">
    <location>
        <begin position="4"/>
        <end position="36"/>
    </location>
</feature>
<feature type="domain" description="F-box-like">
    <location>
        <begin position="41"/>
        <end position="86"/>
    </location>
</feature>
<feature type="repeat" description="WD 1">
    <location>
        <begin position="177"/>
        <end position="216"/>
    </location>
</feature>
<feature type="repeat" description="WD 2">
    <location>
        <begin position="233"/>
        <end position="272"/>
    </location>
</feature>
<feature type="repeat" description="WD 3">
    <location>
        <begin position="274"/>
        <end position="313"/>
    </location>
</feature>
<feature type="repeat" description="WD 4">
    <location>
        <begin position="316"/>
        <end position="354"/>
    </location>
</feature>
<feature type="repeat" description="WD 5">
    <location>
        <begin position="357"/>
        <end position="396"/>
    </location>
</feature>
<feature type="repeat" description="WD 6">
    <location>
        <begin position="399"/>
        <end position="447"/>
    </location>
</feature>
<feature type="repeat" description="WD 7">
    <location>
        <begin position="450"/>
        <end position="489"/>
    </location>
</feature>
<feature type="repeat" description="WD 8">
    <location>
        <begin position="491"/>
        <end position="521"/>
    </location>
</feature>
<feature type="modified residue" description="N-acetylserine" evidence="3">
    <location>
        <position position="2"/>
    </location>
</feature>
<feature type="modified residue" description="N6-acetyllysine" evidence="2">
    <location>
        <position position="102"/>
    </location>
</feature>
<feature type="modified residue" description="Phosphoserine" evidence="3">
    <location>
        <position position="130"/>
    </location>
</feature>
<feature type="cross-link" description="Glycyl lysine isopeptide (Lys-Gly) (interchain with G-Cter in SUMO2)" evidence="3">
    <location>
        <position position="287"/>
    </location>
</feature>
<feature type="sequence variant" id="VAR_082113" description="In DFNY2; uncertain significance; increased protein degradation; dbSNP:rs199659121." evidence="6">
    <original>D</original>
    <variation>V</variation>
    <location>
        <position position="69"/>
    </location>
</feature>
<proteinExistence type="evidence at protein level"/>
<comment type="function">
    <text evidence="1">F-box-like protein involved in the recruitment of the ubiquitin/19S proteasome complex to nuclear receptor-regulated transcription units. Plays an essential role in transcription activation mediated by nuclear receptors. Probably acts as integral component of corepressor complexes that mediates the recruitment of the 19S proteasome complex, leading to the subsequent proteasomal degradation of transcription repressor complexes, thereby allowing cofactor exchange (By similarity).</text>
</comment>
<comment type="subunit">
    <text evidence="6">Probable component of the N-Cor repressor complex and some E3 ubiquitin ligase complex. Interacts with NCOR2 (PubMed:30341416).</text>
</comment>
<comment type="subcellular location">
    <subcellularLocation>
        <location evidence="6">Nucleus</location>
    </subcellularLocation>
</comment>
<comment type="tissue specificity">
    <text evidence="5 6">Fetal brain and prostate. Expressed in the cochlear spiral ganglion neurons, and in outer and inner hair cells (PubMed:30341416).</text>
</comment>
<comment type="domain">
    <text evidence="1">The F-box-like domain is related to the F-box domain, and apparently displays the same function as component of ubiquitin E3 ligase complexes.</text>
</comment>
<comment type="disease" evidence="6">
    <disease id="DI-05525">
        <name>Deafness, Y-linked 2</name>
        <acronym>DFNY2</acronym>
        <description>A form of non-syndromic sensorineural hearing loss. Sensorineural deafness results from damage to the neural receptors of the inner ear, the nerve pathways to the brain, or the area of the brain that receives sound information. DFNY2 patients show bilateral symmetric hearing loss ranging from mild to severe, with onset in the third to fifth decades of life.</description>
        <dbReference type="MIM" id="400047"/>
    </disease>
    <text>The disease may be caused by variants affecting the gene represented in this entry.</text>
</comment>
<comment type="similarity">
    <text evidence="7">Belongs to the WD repeat EBI family.</text>
</comment>
<organism>
    <name type="scientific">Homo sapiens</name>
    <name type="common">Human</name>
    <dbReference type="NCBI Taxonomy" id="9606"/>
    <lineage>
        <taxon>Eukaryota</taxon>
        <taxon>Metazoa</taxon>
        <taxon>Chordata</taxon>
        <taxon>Craniata</taxon>
        <taxon>Vertebrata</taxon>
        <taxon>Euteleostomi</taxon>
        <taxon>Mammalia</taxon>
        <taxon>Eutheria</taxon>
        <taxon>Euarchontoglires</taxon>
        <taxon>Primates</taxon>
        <taxon>Haplorrhini</taxon>
        <taxon>Catarrhini</taxon>
        <taxon>Hominidae</taxon>
        <taxon>Homo</taxon>
    </lineage>
</organism>
<reference key="1">
    <citation type="journal article" date="2003" name="Nature">
        <title>The male-specific region of the human Y chromosome is a mosaic of discrete sequence classes.</title>
        <authorList>
            <person name="Skaletsky H."/>
            <person name="Kuroda-Kawaguchi T."/>
            <person name="Minx P.J."/>
            <person name="Cordum H.S."/>
            <person name="Hillier L.W."/>
            <person name="Brown L.G."/>
            <person name="Repping S."/>
            <person name="Pyntikova T."/>
            <person name="Ali J."/>
            <person name="Bieri T."/>
            <person name="Chinwalla A."/>
            <person name="Delehaunty A."/>
            <person name="Delehaunty K."/>
            <person name="Du H."/>
            <person name="Fewell G."/>
            <person name="Fulton L."/>
            <person name="Fulton R."/>
            <person name="Graves T.A."/>
            <person name="Hou S.-F."/>
            <person name="Latrielle P."/>
            <person name="Leonard S."/>
            <person name="Mardis E."/>
            <person name="Maupin R."/>
            <person name="McPherson J."/>
            <person name="Miner T."/>
            <person name="Nash W."/>
            <person name="Nguyen C."/>
            <person name="Ozersky P."/>
            <person name="Pepin K."/>
            <person name="Rock S."/>
            <person name="Rohlfing T."/>
            <person name="Scott K."/>
            <person name="Schultz B."/>
            <person name="Strong C."/>
            <person name="Tin-Wollam A."/>
            <person name="Yang S.-P."/>
            <person name="Waterston R.H."/>
            <person name="Wilson R.K."/>
            <person name="Rozen S."/>
            <person name="Page D.C."/>
        </authorList>
    </citation>
    <scope>NUCLEOTIDE SEQUENCE [MRNA]</scope>
    <scope>TISSUE SPECIFICITY</scope>
</reference>
<reference key="2">
    <citation type="submission" date="2005-07" db="EMBL/GenBank/DDBJ databases">
        <authorList>
            <person name="Mural R.J."/>
            <person name="Istrail S."/>
            <person name="Sutton G.G."/>
            <person name="Florea L."/>
            <person name="Halpern A.L."/>
            <person name="Mobarry C.M."/>
            <person name="Lippert R."/>
            <person name="Walenz B."/>
            <person name="Shatkay H."/>
            <person name="Dew I."/>
            <person name="Miller J.R."/>
            <person name="Flanigan M.J."/>
            <person name="Edwards N.J."/>
            <person name="Bolanos R."/>
            <person name="Fasulo D."/>
            <person name="Halldorsson B.V."/>
            <person name="Hannenhalli S."/>
            <person name="Turner R."/>
            <person name="Yooseph S."/>
            <person name="Lu F."/>
            <person name="Nusskern D.R."/>
            <person name="Shue B.C."/>
            <person name="Zheng X.H."/>
            <person name="Zhong F."/>
            <person name="Delcher A.L."/>
            <person name="Huson D.H."/>
            <person name="Kravitz S.A."/>
            <person name="Mouchard L."/>
            <person name="Reinert K."/>
            <person name="Remington K.A."/>
            <person name="Clark A.G."/>
            <person name="Waterman M.S."/>
            <person name="Eichler E.E."/>
            <person name="Adams M.D."/>
            <person name="Hunkapiller M.W."/>
            <person name="Myers E.W."/>
            <person name="Venter J.C."/>
        </authorList>
    </citation>
    <scope>NUCLEOTIDE SEQUENCE [LARGE SCALE GENOMIC DNA]</scope>
</reference>
<reference key="3">
    <citation type="journal article" date="2004" name="Genome Res.">
        <title>The status, quality, and expansion of the NIH full-length cDNA project: the Mammalian Gene Collection (MGC).</title>
        <authorList>
            <consortium name="The MGC Project Team"/>
        </authorList>
    </citation>
    <scope>NUCLEOTIDE SEQUENCE [LARGE SCALE MRNA]</scope>
</reference>
<reference key="4">
    <citation type="journal article" date="2019" name="Eur. J. Hum. Genet.">
        <title>TBL1Y: a new gene involved in syndromic hearing loss.</title>
        <authorList>
            <person name="Di Stazio M."/>
            <person name="Collesi C."/>
            <person name="Vozzi D."/>
            <person name="Liu W."/>
            <person name="Myers M."/>
            <person name="Morgan A."/>
            <person name="D Adamo P.A."/>
            <person name="Girotto G."/>
            <person name="Rubinato E."/>
            <person name="Giacca M."/>
            <person name="Gasparini P."/>
        </authorList>
    </citation>
    <scope>INTERACTION WITH NCOR2</scope>
    <scope>SUBCELLULAR LOCATION</scope>
    <scope>TISSUE SPECIFICITY</scope>
    <scope>INVOLVEMENT IN DFNY2</scope>
    <scope>VARIANT DFNY2 VAL-69</scope>
    <scope>CHARACTERIZATION OF VARIANT DFNY2 VAL-69</scope>
</reference>
<gene>
    <name type="primary">TBL1Y</name>
    <name type="synonym">TBL1</name>
</gene>
<dbReference type="EMBL" id="AF332220">
    <property type="protein sequence ID" value="AAK13472.1"/>
    <property type="molecule type" value="mRNA"/>
</dbReference>
<dbReference type="EMBL" id="AF332221">
    <property type="protein sequence ID" value="AAK13473.1"/>
    <property type="molecule type" value="mRNA"/>
</dbReference>
<dbReference type="EMBL" id="AF332222">
    <property type="protein sequence ID" value="AAK13474.1"/>
    <property type="molecule type" value="mRNA"/>
</dbReference>
<dbReference type="EMBL" id="CH471163">
    <property type="protein sequence ID" value="EAW59126.1"/>
    <property type="molecule type" value="Genomic_DNA"/>
</dbReference>
<dbReference type="EMBL" id="BC130471">
    <property type="protein sequence ID" value="AAI30472.1"/>
    <property type="molecule type" value="mRNA"/>
</dbReference>
<dbReference type="EMBL" id="BC130473">
    <property type="protein sequence ID" value="AAI30474.1"/>
    <property type="molecule type" value="mRNA"/>
</dbReference>
<dbReference type="CCDS" id="CCDS14779.1"/>
<dbReference type="RefSeq" id="NP_150600.1">
    <property type="nucleotide sequence ID" value="NM_033284.2"/>
</dbReference>
<dbReference type="RefSeq" id="NP_599020.1">
    <property type="nucleotide sequence ID" value="NM_134258.2"/>
</dbReference>
<dbReference type="RefSeq" id="NP_599021.1">
    <property type="nucleotide sequence ID" value="NM_134259.2"/>
</dbReference>
<dbReference type="SMR" id="Q9BQ87"/>
<dbReference type="BioGRID" id="124751">
    <property type="interactions" value="45"/>
</dbReference>
<dbReference type="CORUM" id="Q9BQ87"/>
<dbReference type="FunCoup" id="Q9BQ87">
    <property type="interactions" value="713"/>
</dbReference>
<dbReference type="IntAct" id="Q9BQ87">
    <property type="interactions" value="35"/>
</dbReference>
<dbReference type="MINT" id="Q9BQ87"/>
<dbReference type="STRING" id="9606.ENSP00000372499"/>
<dbReference type="GlyGen" id="Q9BQ87">
    <property type="glycosylation" value="3 sites, 1 O-linked glycan (3 sites)"/>
</dbReference>
<dbReference type="iPTMnet" id="Q9BQ87"/>
<dbReference type="PhosphoSitePlus" id="Q9BQ87"/>
<dbReference type="BioMuta" id="TBL1Y"/>
<dbReference type="DMDM" id="23396873"/>
<dbReference type="jPOST" id="Q9BQ87"/>
<dbReference type="MassIVE" id="Q9BQ87"/>
<dbReference type="PeptideAtlas" id="Q9BQ87"/>
<dbReference type="ProteomicsDB" id="78642"/>
<dbReference type="Pumba" id="Q9BQ87"/>
<dbReference type="Antibodypedia" id="41670">
    <property type="antibodies" value="91 antibodies from 17 providers"/>
</dbReference>
<dbReference type="DNASU" id="90665"/>
<dbReference type="Ensembl" id="ENST00000346432.3">
    <property type="protein sequence ID" value="ENSP00000328879.4"/>
    <property type="gene ID" value="ENSG00000092377.15"/>
</dbReference>
<dbReference type="Ensembl" id="ENST00000355162.6">
    <property type="protein sequence ID" value="ENSP00000347289.2"/>
    <property type="gene ID" value="ENSG00000092377.15"/>
</dbReference>
<dbReference type="Ensembl" id="ENST00000383032.6">
    <property type="protein sequence ID" value="ENSP00000372499.1"/>
    <property type="gene ID" value="ENSG00000092377.15"/>
</dbReference>
<dbReference type="GeneID" id="90665"/>
<dbReference type="KEGG" id="hsa:90665"/>
<dbReference type="MANE-Select" id="ENST00000383032.6">
    <property type="protein sequence ID" value="ENSP00000372499.1"/>
    <property type="RefSeq nucleotide sequence ID" value="NM_033284.2"/>
    <property type="RefSeq protein sequence ID" value="NP_150600.1"/>
</dbReference>
<dbReference type="UCSC" id="uc004frb.3">
    <property type="organism name" value="human"/>
</dbReference>
<dbReference type="AGR" id="HGNC:18502"/>
<dbReference type="CTD" id="90665"/>
<dbReference type="DisGeNET" id="90665"/>
<dbReference type="GeneCards" id="TBL1Y"/>
<dbReference type="HGNC" id="HGNC:18502">
    <property type="gene designation" value="TBL1Y"/>
</dbReference>
<dbReference type="HPA" id="ENSG00000092377">
    <property type="expression patterns" value="Tissue enhanced (prostate, thyroid gland)"/>
</dbReference>
<dbReference type="MalaCards" id="TBL1Y"/>
<dbReference type="MIM" id="400033">
    <property type="type" value="gene"/>
</dbReference>
<dbReference type="MIM" id="400047">
    <property type="type" value="phenotype"/>
</dbReference>
<dbReference type="neXtProt" id="NX_Q9BQ87"/>
<dbReference type="OpenTargets" id="ENSG00000092377"/>
<dbReference type="PharmGKB" id="PA38564"/>
<dbReference type="VEuPathDB" id="HostDB:ENSG00000092377"/>
<dbReference type="GeneTree" id="ENSGT00940000153421"/>
<dbReference type="HOGENOM" id="CLU_007609_2_0_1"/>
<dbReference type="InParanoid" id="Q9BQ87"/>
<dbReference type="OMA" id="NEASICK"/>
<dbReference type="PAN-GO" id="Q9BQ87">
    <property type="GO annotations" value="4 GO annotations based on evolutionary models"/>
</dbReference>
<dbReference type="PhylomeDB" id="Q9BQ87"/>
<dbReference type="TreeFam" id="TF323190"/>
<dbReference type="PathwayCommons" id="Q9BQ87"/>
<dbReference type="SignaLink" id="Q9BQ87"/>
<dbReference type="SIGNOR" id="Q9BQ87"/>
<dbReference type="BioGRID-ORCS" id="90665">
    <property type="hits" value="18 hits in 764 CRISPR screens"/>
</dbReference>
<dbReference type="ChiTaRS" id="TBL1Y">
    <property type="organism name" value="human"/>
</dbReference>
<dbReference type="GenomeRNAi" id="90665"/>
<dbReference type="Pharos" id="Q9BQ87">
    <property type="development level" value="Tbio"/>
</dbReference>
<dbReference type="PRO" id="PR:Q9BQ87"/>
<dbReference type="Proteomes" id="UP000005640">
    <property type="component" value="Chromosome Y"/>
</dbReference>
<dbReference type="RNAct" id="Q9BQ87">
    <property type="molecule type" value="protein"/>
</dbReference>
<dbReference type="Bgee" id="ENSG00000092377">
    <property type="expression patterns" value="Expressed in primordial germ cell in gonad and 72 other cell types or tissues"/>
</dbReference>
<dbReference type="ExpressionAtlas" id="Q9BQ87">
    <property type="expression patterns" value="baseline and differential"/>
</dbReference>
<dbReference type="GO" id="GO:0000118">
    <property type="term" value="C:histone deacetylase complex"/>
    <property type="evidence" value="ECO:0000318"/>
    <property type="project" value="GO_Central"/>
</dbReference>
<dbReference type="GO" id="GO:0005654">
    <property type="term" value="C:nucleoplasm"/>
    <property type="evidence" value="ECO:0000314"/>
    <property type="project" value="HPA"/>
</dbReference>
<dbReference type="GO" id="GO:0005634">
    <property type="term" value="C:nucleus"/>
    <property type="evidence" value="ECO:0000314"/>
    <property type="project" value="UniProtKB"/>
</dbReference>
<dbReference type="GO" id="GO:0003714">
    <property type="term" value="F:transcription corepressor activity"/>
    <property type="evidence" value="ECO:0000318"/>
    <property type="project" value="GO_Central"/>
</dbReference>
<dbReference type="GO" id="GO:0006357">
    <property type="term" value="P:regulation of transcription by RNA polymerase II"/>
    <property type="evidence" value="ECO:0000318"/>
    <property type="project" value="GO_Central"/>
</dbReference>
<dbReference type="CDD" id="cd00200">
    <property type="entry name" value="WD40"/>
    <property type="match status" value="1"/>
</dbReference>
<dbReference type="FunFam" id="1.20.960.30:FF:000001">
    <property type="entry name" value="F-box-like/WD repeat-containing protein TBL1XR1"/>
    <property type="match status" value="1"/>
</dbReference>
<dbReference type="FunFam" id="2.130.10.10:FF:000014">
    <property type="entry name" value="Putative F-box-like/WD repeat-containing protein TBL1XR1"/>
    <property type="match status" value="1"/>
</dbReference>
<dbReference type="Gene3D" id="1.20.960.30">
    <property type="match status" value="1"/>
</dbReference>
<dbReference type="Gene3D" id="2.130.10.10">
    <property type="entry name" value="YVTN repeat-like/Quinoprotein amine dehydrogenase"/>
    <property type="match status" value="1"/>
</dbReference>
<dbReference type="InterPro" id="IPR045183">
    <property type="entry name" value="Ebi-like"/>
</dbReference>
<dbReference type="InterPro" id="IPR020472">
    <property type="entry name" value="G-protein_beta_WD-40_rep"/>
</dbReference>
<dbReference type="InterPro" id="IPR006594">
    <property type="entry name" value="LisH"/>
</dbReference>
<dbReference type="InterPro" id="IPR015943">
    <property type="entry name" value="WD40/YVTN_repeat-like_dom_sf"/>
</dbReference>
<dbReference type="InterPro" id="IPR019775">
    <property type="entry name" value="WD40_repeat_CS"/>
</dbReference>
<dbReference type="InterPro" id="IPR036322">
    <property type="entry name" value="WD40_repeat_dom_sf"/>
</dbReference>
<dbReference type="InterPro" id="IPR001680">
    <property type="entry name" value="WD40_rpt"/>
</dbReference>
<dbReference type="PANTHER" id="PTHR22846:SF73">
    <property type="entry name" value="F-BOX-LIKE_WD REPEAT-CONTAINING PROTEIN TBL1Y"/>
    <property type="match status" value="1"/>
</dbReference>
<dbReference type="PANTHER" id="PTHR22846">
    <property type="entry name" value="WD40 REPEAT PROTEIN"/>
    <property type="match status" value="1"/>
</dbReference>
<dbReference type="Pfam" id="PF08513">
    <property type="entry name" value="LisH"/>
    <property type="match status" value="1"/>
</dbReference>
<dbReference type="Pfam" id="PF00400">
    <property type="entry name" value="WD40"/>
    <property type="match status" value="6"/>
</dbReference>
<dbReference type="PRINTS" id="PR00320">
    <property type="entry name" value="GPROTEINBRPT"/>
</dbReference>
<dbReference type="SMART" id="SM00667">
    <property type="entry name" value="LisH"/>
    <property type="match status" value="1"/>
</dbReference>
<dbReference type="SMART" id="SM00320">
    <property type="entry name" value="WD40"/>
    <property type="match status" value="8"/>
</dbReference>
<dbReference type="SUPFAM" id="SSF50978">
    <property type="entry name" value="WD40 repeat-like"/>
    <property type="match status" value="1"/>
</dbReference>
<dbReference type="PROSITE" id="PS50896">
    <property type="entry name" value="LISH"/>
    <property type="match status" value="1"/>
</dbReference>
<dbReference type="PROSITE" id="PS00678">
    <property type="entry name" value="WD_REPEATS_1"/>
    <property type="match status" value="4"/>
</dbReference>
<dbReference type="PROSITE" id="PS50082">
    <property type="entry name" value="WD_REPEATS_2"/>
    <property type="match status" value="6"/>
</dbReference>
<dbReference type="PROSITE" id="PS50294">
    <property type="entry name" value="WD_REPEATS_REGION"/>
    <property type="match status" value="1"/>
</dbReference>
<protein>
    <recommendedName>
        <fullName>F-box-like/WD repeat-containing protein TBL1Y</fullName>
    </recommendedName>
    <alternativeName>
        <fullName>Transducin beta-like protein 1Y</fullName>
    </alternativeName>
    <alternativeName>
        <fullName>Transducin-beta-like protein 1, Y-linked</fullName>
    </alternativeName>
</protein>
<name>TBL1Y_HUMAN</name>
<keyword id="KW-0007">Acetylation</keyword>
<keyword id="KW-0010">Activator</keyword>
<keyword id="KW-0209">Deafness</keyword>
<keyword id="KW-0225">Disease variant</keyword>
<keyword id="KW-1017">Isopeptide bond</keyword>
<keyword id="KW-1010">Non-syndromic deafness</keyword>
<keyword id="KW-0539">Nucleus</keyword>
<keyword id="KW-0597">Phosphoprotein</keyword>
<keyword id="KW-1267">Proteomics identification</keyword>
<keyword id="KW-1185">Reference proteome</keyword>
<keyword id="KW-0677">Repeat</keyword>
<keyword id="KW-0804">Transcription</keyword>
<keyword id="KW-0805">Transcription regulation</keyword>
<keyword id="KW-0832">Ubl conjugation</keyword>
<keyword id="KW-0833">Ubl conjugation pathway</keyword>
<keyword id="KW-0853">WD repeat</keyword>
<accession>Q9BQ87</accession>
<accession>A1L4B3</accession>
<evidence type="ECO:0000250" key="1"/>
<evidence type="ECO:0000250" key="2">
    <source>
        <dbReference type="UniProtKB" id="Q8BHJ5"/>
    </source>
</evidence>
<evidence type="ECO:0000250" key="3">
    <source>
        <dbReference type="UniProtKB" id="Q9BZK7"/>
    </source>
</evidence>
<evidence type="ECO:0000255" key="4">
    <source>
        <dbReference type="PROSITE-ProRule" id="PRU00126"/>
    </source>
</evidence>
<evidence type="ECO:0000269" key="5">
    <source>
    </source>
</evidence>
<evidence type="ECO:0000269" key="6">
    <source>
    </source>
</evidence>
<evidence type="ECO:0000305" key="7"/>